<dbReference type="EC" id="6.3.1.5" evidence="1"/>
<dbReference type="EMBL" id="CP001657">
    <property type="protein sequence ID" value="ACT12939.1"/>
    <property type="molecule type" value="Genomic_DNA"/>
</dbReference>
<dbReference type="RefSeq" id="WP_015840138.1">
    <property type="nucleotide sequence ID" value="NC_012917.1"/>
</dbReference>
<dbReference type="SMR" id="C6DFZ6"/>
<dbReference type="STRING" id="561230.PC1_1898"/>
<dbReference type="KEGG" id="pct:PC1_1898"/>
<dbReference type="eggNOG" id="COG0171">
    <property type="taxonomic scope" value="Bacteria"/>
</dbReference>
<dbReference type="HOGENOM" id="CLU_059327_3_0_6"/>
<dbReference type="OrthoDB" id="3266517at2"/>
<dbReference type="UniPathway" id="UPA00253">
    <property type="reaction ID" value="UER00333"/>
</dbReference>
<dbReference type="Proteomes" id="UP000002736">
    <property type="component" value="Chromosome"/>
</dbReference>
<dbReference type="GO" id="GO:0005737">
    <property type="term" value="C:cytoplasm"/>
    <property type="evidence" value="ECO:0007669"/>
    <property type="project" value="InterPro"/>
</dbReference>
<dbReference type="GO" id="GO:0005524">
    <property type="term" value="F:ATP binding"/>
    <property type="evidence" value="ECO:0007669"/>
    <property type="project" value="UniProtKB-UniRule"/>
</dbReference>
<dbReference type="GO" id="GO:0004359">
    <property type="term" value="F:glutaminase activity"/>
    <property type="evidence" value="ECO:0007669"/>
    <property type="project" value="InterPro"/>
</dbReference>
<dbReference type="GO" id="GO:0046872">
    <property type="term" value="F:metal ion binding"/>
    <property type="evidence" value="ECO:0007669"/>
    <property type="project" value="UniProtKB-KW"/>
</dbReference>
<dbReference type="GO" id="GO:0003952">
    <property type="term" value="F:NAD+ synthase (glutamine-hydrolyzing) activity"/>
    <property type="evidence" value="ECO:0007669"/>
    <property type="project" value="InterPro"/>
</dbReference>
<dbReference type="GO" id="GO:0008795">
    <property type="term" value="F:NAD+ synthase activity"/>
    <property type="evidence" value="ECO:0007669"/>
    <property type="project" value="UniProtKB-UniRule"/>
</dbReference>
<dbReference type="GO" id="GO:0009435">
    <property type="term" value="P:NAD biosynthetic process"/>
    <property type="evidence" value="ECO:0007669"/>
    <property type="project" value="UniProtKB-UniRule"/>
</dbReference>
<dbReference type="CDD" id="cd00553">
    <property type="entry name" value="NAD_synthase"/>
    <property type="match status" value="1"/>
</dbReference>
<dbReference type="FunFam" id="3.40.50.620:FF:000015">
    <property type="entry name" value="NH(3)-dependent NAD(+) synthetase"/>
    <property type="match status" value="1"/>
</dbReference>
<dbReference type="Gene3D" id="3.40.50.620">
    <property type="entry name" value="HUPs"/>
    <property type="match status" value="1"/>
</dbReference>
<dbReference type="HAMAP" id="MF_00193">
    <property type="entry name" value="NadE_ammonia_dep"/>
    <property type="match status" value="1"/>
</dbReference>
<dbReference type="InterPro" id="IPR022310">
    <property type="entry name" value="NAD/GMP_synthase"/>
</dbReference>
<dbReference type="InterPro" id="IPR003694">
    <property type="entry name" value="NAD_synthase"/>
</dbReference>
<dbReference type="InterPro" id="IPR022926">
    <property type="entry name" value="NH(3)-dep_NAD(+)_synth"/>
</dbReference>
<dbReference type="InterPro" id="IPR014729">
    <property type="entry name" value="Rossmann-like_a/b/a_fold"/>
</dbReference>
<dbReference type="NCBIfam" id="TIGR00552">
    <property type="entry name" value="nadE"/>
    <property type="match status" value="1"/>
</dbReference>
<dbReference type="NCBIfam" id="NF001979">
    <property type="entry name" value="PRK00768.1"/>
    <property type="match status" value="1"/>
</dbReference>
<dbReference type="PANTHER" id="PTHR23090">
    <property type="entry name" value="NH 3 /GLUTAMINE-DEPENDENT NAD + SYNTHETASE"/>
    <property type="match status" value="1"/>
</dbReference>
<dbReference type="PANTHER" id="PTHR23090:SF7">
    <property type="entry name" value="NH(3)-DEPENDENT NAD(+) SYNTHETASE"/>
    <property type="match status" value="1"/>
</dbReference>
<dbReference type="Pfam" id="PF02540">
    <property type="entry name" value="NAD_synthase"/>
    <property type="match status" value="1"/>
</dbReference>
<dbReference type="SUPFAM" id="SSF52402">
    <property type="entry name" value="Adenine nucleotide alpha hydrolases-like"/>
    <property type="match status" value="1"/>
</dbReference>
<gene>
    <name evidence="1" type="primary">nadE</name>
    <name type="ordered locus">PC1_1898</name>
</gene>
<sequence length="274" mass="30278">MSLQNDIITALGVKSSIEPAQEIRVSVDFLKNYLNAHPFVTSLVLGISGGQDSTLTGKLCQTAITELRNETGNARYQFIAVRLPYGVQADEADCQDAIAFIQPDRVLTVNIKPAIEASEATLRAIGVELSDFVKGNEKARERMKAQYSIAGMNAGLVVGTDHAAEAVTGFFTKYGDGGTDINPIFRLNKRQGKALLRELGCPSHLYTKAPTADLEEDRPSLPDEVALGVTYEKIDDYLEGKQIEAKDAAIIENWYRKTEHKRRPPITVFDDFWR</sequence>
<keyword id="KW-0067">ATP-binding</keyword>
<keyword id="KW-0436">Ligase</keyword>
<keyword id="KW-0460">Magnesium</keyword>
<keyword id="KW-0479">Metal-binding</keyword>
<keyword id="KW-0520">NAD</keyword>
<keyword id="KW-0547">Nucleotide-binding</keyword>
<protein>
    <recommendedName>
        <fullName evidence="1">NH(3)-dependent NAD(+) synthetase</fullName>
        <ecNumber evidence="1">6.3.1.5</ecNumber>
    </recommendedName>
</protein>
<name>NADE_PECCP</name>
<reference key="1">
    <citation type="submission" date="2009-07" db="EMBL/GenBank/DDBJ databases">
        <title>Complete sequence of Pectobacterium carotovorum subsp. carotovorum PC1.</title>
        <authorList>
            <consortium name="US DOE Joint Genome Institute"/>
            <person name="Lucas S."/>
            <person name="Copeland A."/>
            <person name="Lapidus A."/>
            <person name="Glavina del Rio T."/>
            <person name="Tice H."/>
            <person name="Bruce D."/>
            <person name="Goodwin L."/>
            <person name="Pitluck S."/>
            <person name="Munk A.C."/>
            <person name="Brettin T."/>
            <person name="Detter J.C."/>
            <person name="Han C."/>
            <person name="Tapia R."/>
            <person name="Larimer F."/>
            <person name="Land M."/>
            <person name="Hauser L."/>
            <person name="Kyrpides N."/>
            <person name="Mikhailova N."/>
            <person name="Balakrishnan V."/>
            <person name="Glasner J."/>
            <person name="Perna N.T."/>
        </authorList>
    </citation>
    <scope>NUCLEOTIDE SEQUENCE [LARGE SCALE GENOMIC DNA]</scope>
    <source>
        <strain>PC1</strain>
    </source>
</reference>
<proteinExistence type="inferred from homology"/>
<accession>C6DFZ6</accession>
<comment type="function">
    <text evidence="1">Catalyzes the ATP-dependent amidation of deamido-NAD to form NAD. Uses ammonia as a nitrogen source.</text>
</comment>
<comment type="catalytic activity">
    <reaction evidence="1">
        <text>deamido-NAD(+) + NH4(+) + ATP = AMP + diphosphate + NAD(+) + H(+)</text>
        <dbReference type="Rhea" id="RHEA:21188"/>
        <dbReference type="ChEBI" id="CHEBI:15378"/>
        <dbReference type="ChEBI" id="CHEBI:28938"/>
        <dbReference type="ChEBI" id="CHEBI:30616"/>
        <dbReference type="ChEBI" id="CHEBI:33019"/>
        <dbReference type="ChEBI" id="CHEBI:57540"/>
        <dbReference type="ChEBI" id="CHEBI:58437"/>
        <dbReference type="ChEBI" id="CHEBI:456215"/>
        <dbReference type="EC" id="6.3.1.5"/>
    </reaction>
</comment>
<comment type="pathway">
    <text evidence="1">Cofactor biosynthesis; NAD(+) biosynthesis; NAD(+) from deamido-NAD(+) (ammonia route): step 1/1.</text>
</comment>
<comment type="subunit">
    <text evidence="1">Homodimer.</text>
</comment>
<comment type="similarity">
    <text evidence="1">Belongs to the NAD synthetase family.</text>
</comment>
<evidence type="ECO:0000255" key="1">
    <source>
        <dbReference type="HAMAP-Rule" id="MF_00193"/>
    </source>
</evidence>
<feature type="chain" id="PRO_1000204020" description="NH(3)-dependent NAD(+) synthetase">
    <location>
        <begin position="1"/>
        <end position="274"/>
    </location>
</feature>
<feature type="binding site" evidence="1">
    <location>
        <begin position="46"/>
        <end position="53"/>
    </location>
    <ligand>
        <name>ATP</name>
        <dbReference type="ChEBI" id="CHEBI:30616"/>
    </ligand>
</feature>
<feature type="binding site" evidence="1">
    <location>
        <position position="52"/>
    </location>
    <ligand>
        <name>Mg(2+)</name>
        <dbReference type="ChEBI" id="CHEBI:18420"/>
    </ligand>
</feature>
<feature type="binding site" evidence="1">
    <location>
        <position position="140"/>
    </location>
    <ligand>
        <name>deamido-NAD(+)</name>
        <dbReference type="ChEBI" id="CHEBI:58437"/>
    </ligand>
</feature>
<feature type="binding site" evidence="1">
    <location>
        <position position="160"/>
    </location>
    <ligand>
        <name>ATP</name>
        <dbReference type="ChEBI" id="CHEBI:30616"/>
    </ligand>
</feature>
<feature type="binding site" evidence="1">
    <location>
        <position position="165"/>
    </location>
    <ligand>
        <name>Mg(2+)</name>
        <dbReference type="ChEBI" id="CHEBI:18420"/>
    </ligand>
</feature>
<feature type="binding site" evidence="1">
    <location>
        <position position="173"/>
    </location>
    <ligand>
        <name>deamido-NAD(+)</name>
        <dbReference type="ChEBI" id="CHEBI:58437"/>
    </ligand>
</feature>
<feature type="binding site" evidence="1">
    <location>
        <position position="180"/>
    </location>
    <ligand>
        <name>deamido-NAD(+)</name>
        <dbReference type="ChEBI" id="CHEBI:58437"/>
    </ligand>
</feature>
<feature type="binding site" evidence="1">
    <location>
        <position position="189"/>
    </location>
    <ligand>
        <name>ATP</name>
        <dbReference type="ChEBI" id="CHEBI:30616"/>
    </ligand>
</feature>
<feature type="binding site" evidence="1">
    <location>
        <position position="211"/>
    </location>
    <ligand>
        <name>ATP</name>
        <dbReference type="ChEBI" id="CHEBI:30616"/>
    </ligand>
</feature>
<feature type="binding site" evidence="1">
    <location>
        <begin position="260"/>
        <end position="261"/>
    </location>
    <ligand>
        <name>deamido-NAD(+)</name>
        <dbReference type="ChEBI" id="CHEBI:58437"/>
    </ligand>
</feature>
<organism>
    <name type="scientific">Pectobacterium carotovorum subsp. carotovorum (strain PC1)</name>
    <dbReference type="NCBI Taxonomy" id="561230"/>
    <lineage>
        <taxon>Bacteria</taxon>
        <taxon>Pseudomonadati</taxon>
        <taxon>Pseudomonadota</taxon>
        <taxon>Gammaproteobacteria</taxon>
        <taxon>Enterobacterales</taxon>
        <taxon>Pectobacteriaceae</taxon>
        <taxon>Pectobacterium</taxon>
    </lineage>
</organism>